<comment type="function">
    <text evidence="1">F(1)F(0) ATP synthase produces ATP from ADP in the presence of a proton or sodium gradient. F-type ATPases consist of two structural domains, F(1) containing the extramembraneous catalytic core and F(0) containing the membrane proton channel, linked together by a central stalk and a peripheral stalk. During catalysis, ATP synthesis in the catalytic domain of F(1) is coupled via a rotary mechanism of the central stalk subunits to proton translocation (By similarity).</text>
</comment>
<comment type="function">
    <text evidence="1">Component of the F(0) channel, it forms part of the peripheral stalk, linking F(1) to F(0). The b'-subunit is a diverged and duplicated form of b found in plants and photosynthetic bacteria (By similarity).</text>
</comment>
<comment type="subunit">
    <text evidence="1">F-type ATPases have 2 components, F(1) - the catalytic core - and F(0) - the membrane proton channel. F(1) has five subunits: alpha(3), beta(3), gamma(1), delta(1), epsilon(1). F(0) has three main subunits: a(1), b(2) and c(10-14). The alpha and beta chains form an alternating ring which encloses part of the gamma chain. F(1) is attached to F(0) by a central stalk formed by the gamma and epsilon chains, while a peripheral stalk is formed by the delta and b chains (By similarity).</text>
</comment>
<comment type="subcellular location">
    <subcellularLocation>
        <location evidence="1">Cell inner membrane</location>
        <topology evidence="1">Single-pass membrane protein</topology>
    </subcellularLocation>
</comment>
<comment type="similarity">
    <text evidence="4">Belongs to the ATPase B chain family.</text>
</comment>
<name>ATPF2_BEII9</name>
<accession>B2IGK9</accession>
<organism>
    <name type="scientific">Beijerinckia indica subsp. indica (strain ATCC 9039 / DSM 1715 / NCIMB 8712)</name>
    <dbReference type="NCBI Taxonomy" id="395963"/>
    <lineage>
        <taxon>Bacteria</taxon>
        <taxon>Pseudomonadati</taxon>
        <taxon>Pseudomonadota</taxon>
        <taxon>Alphaproteobacteria</taxon>
        <taxon>Hyphomicrobiales</taxon>
        <taxon>Beijerinckiaceae</taxon>
        <taxon>Beijerinckia</taxon>
    </lineage>
</organism>
<dbReference type="EMBL" id="CP001016">
    <property type="protein sequence ID" value="ACB94391.1"/>
    <property type="molecule type" value="Genomic_DNA"/>
</dbReference>
<dbReference type="RefSeq" id="WP_012383748.1">
    <property type="nucleotide sequence ID" value="NC_010581.1"/>
</dbReference>
<dbReference type="SMR" id="B2IGK9"/>
<dbReference type="STRING" id="395963.Bind_0741"/>
<dbReference type="KEGG" id="bid:Bind_0741"/>
<dbReference type="eggNOG" id="COG0711">
    <property type="taxonomic scope" value="Bacteria"/>
</dbReference>
<dbReference type="HOGENOM" id="CLU_079215_1_2_5"/>
<dbReference type="OrthoDB" id="9805716at2"/>
<dbReference type="Proteomes" id="UP000001695">
    <property type="component" value="Chromosome"/>
</dbReference>
<dbReference type="GO" id="GO:0005886">
    <property type="term" value="C:plasma membrane"/>
    <property type="evidence" value="ECO:0007669"/>
    <property type="project" value="UniProtKB-SubCell"/>
</dbReference>
<dbReference type="GO" id="GO:0045259">
    <property type="term" value="C:proton-transporting ATP synthase complex"/>
    <property type="evidence" value="ECO:0007669"/>
    <property type="project" value="UniProtKB-KW"/>
</dbReference>
<dbReference type="GO" id="GO:0046933">
    <property type="term" value="F:proton-transporting ATP synthase activity, rotational mechanism"/>
    <property type="evidence" value="ECO:0007669"/>
    <property type="project" value="UniProtKB-UniRule"/>
</dbReference>
<dbReference type="GO" id="GO:0046961">
    <property type="term" value="F:proton-transporting ATPase activity, rotational mechanism"/>
    <property type="evidence" value="ECO:0007669"/>
    <property type="project" value="TreeGrafter"/>
</dbReference>
<dbReference type="CDD" id="cd06503">
    <property type="entry name" value="ATP-synt_Fo_b"/>
    <property type="match status" value="1"/>
</dbReference>
<dbReference type="HAMAP" id="MF_01398">
    <property type="entry name" value="ATP_synth_b_bprime"/>
    <property type="match status" value="1"/>
</dbReference>
<dbReference type="InterPro" id="IPR002146">
    <property type="entry name" value="ATP_synth_b/b'su_bac/chlpt"/>
</dbReference>
<dbReference type="InterPro" id="IPR050059">
    <property type="entry name" value="ATP_synthase_B_chain"/>
</dbReference>
<dbReference type="PANTHER" id="PTHR33445:SF1">
    <property type="entry name" value="ATP SYNTHASE SUBUNIT B"/>
    <property type="match status" value="1"/>
</dbReference>
<dbReference type="PANTHER" id="PTHR33445">
    <property type="entry name" value="ATP SYNTHASE SUBUNIT B', CHLOROPLASTIC"/>
    <property type="match status" value="1"/>
</dbReference>
<dbReference type="Pfam" id="PF00430">
    <property type="entry name" value="ATP-synt_B"/>
    <property type="match status" value="1"/>
</dbReference>
<gene>
    <name type="primary">atpF2</name>
    <name type="synonym">atpG</name>
    <name type="ordered locus">Bind_0741</name>
</gene>
<reference key="1">
    <citation type="journal article" date="2010" name="J. Bacteriol.">
        <title>Complete genome sequence of Beijerinckia indica subsp. indica.</title>
        <authorList>
            <person name="Tamas I."/>
            <person name="Dedysh S.N."/>
            <person name="Liesack W."/>
            <person name="Stott M.B."/>
            <person name="Alam M."/>
            <person name="Murrell J.C."/>
            <person name="Dunfield P.F."/>
        </authorList>
    </citation>
    <scope>NUCLEOTIDE SEQUENCE [LARGE SCALE GENOMIC DNA]</scope>
    <source>
        <strain>ATCC 9039 / DSM 1715 / NCIMB 8712</strain>
    </source>
</reference>
<sequence length="187" mass="19897">MAQERAEHESADQHTTSTGVPHEGQGEPFPPFDSSNFAPLLIWLAISFLLLYALMSKLVLPRIGGILHTRNEKLRSDMHEATALHAQAKEAAALQEKTIADAKAKAIALAQENQAKLRAESDAKQHAVEAELAAKLTAAEARITETKAAAMSNVTAIAQEAASAIVQQFTGKAPDAKKLTAALKAKA</sequence>
<feature type="chain" id="PRO_0000369001" description="ATP synthase subunit b 2">
    <location>
        <begin position="1"/>
        <end position="187"/>
    </location>
</feature>
<feature type="transmembrane region" description="Helical" evidence="2">
    <location>
        <begin position="40"/>
        <end position="60"/>
    </location>
</feature>
<feature type="region of interest" description="Disordered" evidence="3">
    <location>
        <begin position="1"/>
        <end position="31"/>
    </location>
</feature>
<feature type="compositionally biased region" description="Basic and acidic residues" evidence="3">
    <location>
        <begin position="1"/>
        <end position="12"/>
    </location>
</feature>
<protein>
    <recommendedName>
        <fullName>ATP synthase subunit b 2</fullName>
    </recommendedName>
    <alternativeName>
        <fullName>ATP synthase F(0) sector subunit b 2</fullName>
    </alternativeName>
    <alternativeName>
        <fullName>ATPase subunit I 2</fullName>
    </alternativeName>
    <alternativeName>
        <fullName>F-type ATPase subunit b 2</fullName>
        <shortName>F-ATPase subunit b 2</shortName>
    </alternativeName>
</protein>
<keyword id="KW-0066">ATP synthesis</keyword>
<keyword id="KW-0997">Cell inner membrane</keyword>
<keyword id="KW-1003">Cell membrane</keyword>
<keyword id="KW-0138">CF(0)</keyword>
<keyword id="KW-0375">Hydrogen ion transport</keyword>
<keyword id="KW-0406">Ion transport</keyword>
<keyword id="KW-0472">Membrane</keyword>
<keyword id="KW-1185">Reference proteome</keyword>
<keyword id="KW-0812">Transmembrane</keyword>
<keyword id="KW-1133">Transmembrane helix</keyword>
<keyword id="KW-0813">Transport</keyword>
<proteinExistence type="inferred from homology"/>
<evidence type="ECO:0000250" key="1"/>
<evidence type="ECO:0000255" key="2"/>
<evidence type="ECO:0000256" key="3">
    <source>
        <dbReference type="SAM" id="MobiDB-lite"/>
    </source>
</evidence>
<evidence type="ECO:0000305" key="4"/>